<accession>B1LBN2</accession>
<feature type="chain" id="PRO_1000121833" description="Large ribosomal subunit protein uL29">
    <location>
        <begin position="1"/>
        <end position="66"/>
    </location>
</feature>
<protein>
    <recommendedName>
        <fullName evidence="1">Large ribosomal subunit protein uL29</fullName>
    </recommendedName>
    <alternativeName>
        <fullName evidence="2">50S ribosomal protein L29</fullName>
    </alternativeName>
</protein>
<keyword id="KW-0687">Ribonucleoprotein</keyword>
<keyword id="KW-0689">Ribosomal protein</keyword>
<proteinExistence type="inferred from homology"/>
<sequence length="66" mass="7972">MKASELRNYTDEELKNLLEEKKRQLMELRFQLAMGQLKNTSLIKLTKRDIARIKTILRERELGIRR</sequence>
<dbReference type="EMBL" id="CP000969">
    <property type="protein sequence ID" value="ACB09730.1"/>
    <property type="molecule type" value="Genomic_DNA"/>
</dbReference>
<dbReference type="RefSeq" id="WP_004081820.1">
    <property type="nucleotide sequence ID" value="NC_010483.1"/>
</dbReference>
<dbReference type="BMRB" id="B1LBN2"/>
<dbReference type="SMR" id="B1LBN2"/>
<dbReference type="KEGG" id="trq:TRQ2_1386"/>
<dbReference type="HOGENOM" id="CLU_158491_5_2_0"/>
<dbReference type="Proteomes" id="UP000001687">
    <property type="component" value="Chromosome"/>
</dbReference>
<dbReference type="GO" id="GO:0022625">
    <property type="term" value="C:cytosolic large ribosomal subunit"/>
    <property type="evidence" value="ECO:0007669"/>
    <property type="project" value="TreeGrafter"/>
</dbReference>
<dbReference type="GO" id="GO:0003735">
    <property type="term" value="F:structural constituent of ribosome"/>
    <property type="evidence" value="ECO:0007669"/>
    <property type="project" value="InterPro"/>
</dbReference>
<dbReference type="GO" id="GO:0006412">
    <property type="term" value="P:translation"/>
    <property type="evidence" value="ECO:0007669"/>
    <property type="project" value="UniProtKB-UniRule"/>
</dbReference>
<dbReference type="CDD" id="cd00427">
    <property type="entry name" value="Ribosomal_L29_HIP"/>
    <property type="match status" value="1"/>
</dbReference>
<dbReference type="FunFam" id="1.10.287.310:FF:000001">
    <property type="entry name" value="50S ribosomal protein L29"/>
    <property type="match status" value="1"/>
</dbReference>
<dbReference type="Gene3D" id="1.10.287.310">
    <property type="match status" value="1"/>
</dbReference>
<dbReference type="HAMAP" id="MF_00374">
    <property type="entry name" value="Ribosomal_uL29"/>
    <property type="match status" value="1"/>
</dbReference>
<dbReference type="InterPro" id="IPR050063">
    <property type="entry name" value="Ribosomal_protein_uL29"/>
</dbReference>
<dbReference type="InterPro" id="IPR001854">
    <property type="entry name" value="Ribosomal_uL29"/>
</dbReference>
<dbReference type="InterPro" id="IPR018254">
    <property type="entry name" value="Ribosomal_uL29_CS"/>
</dbReference>
<dbReference type="InterPro" id="IPR036049">
    <property type="entry name" value="Ribosomal_uL29_sf"/>
</dbReference>
<dbReference type="NCBIfam" id="TIGR00012">
    <property type="entry name" value="L29"/>
    <property type="match status" value="1"/>
</dbReference>
<dbReference type="PANTHER" id="PTHR10916">
    <property type="entry name" value="60S RIBOSOMAL PROTEIN L35/50S RIBOSOMAL PROTEIN L29"/>
    <property type="match status" value="1"/>
</dbReference>
<dbReference type="PANTHER" id="PTHR10916:SF0">
    <property type="entry name" value="LARGE RIBOSOMAL SUBUNIT PROTEIN UL29C"/>
    <property type="match status" value="1"/>
</dbReference>
<dbReference type="Pfam" id="PF00831">
    <property type="entry name" value="Ribosomal_L29"/>
    <property type="match status" value="1"/>
</dbReference>
<dbReference type="SUPFAM" id="SSF46561">
    <property type="entry name" value="Ribosomal protein L29 (L29p)"/>
    <property type="match status" value="1"/>
</dbReference>
<dbReference type="PROSITE" id="PS00579">
    <property type="entry name" value="RIBOSOMAL_L29"/>
    <property type="match status" value="1"/>
</dbReference>
<organism>
    <name type="scientific">Thermotoga sp. (strain RQ2)</name>
    <dbReference type="NCBI Taxonomy" id="126740"/>
    <lineage>
        <taxon>Bacteria</taxon>
        <taxon>Thermotogati</taxon>
        <taxon>Thermotogota</taxon>
        <taxon>Thermotogae</taxon>
        <taxon>Thermotogales</taxon>
        <taxon>Thermotogaceae</taxon>
        <taxon>Thermotoga</taxon>
    </lineage>
</organism>
<reference key="1">
    <citation type="journal article" date="2011" name="J. Bacteriol.">
        <title>Genome sequence of Thermotoga sp. strain RQ2, a hyperthermophilic bacterium isolated from a geothermally heated region of the seafloor near Ribeira Quente, the Azores.</title>
        <authorList>
            <person name="Swithers K.S."/>
            <person name="DiPippo J.L."/>
            <person name="Bruce D.C."/>
            <person name="Detter C."/>
            <person name="Tapia R."/>
            <person name="Han S."/>
            <person name="Saunders E."/>
            <person name="Goodwin L.A."/>
            <person name="Han J."/>
            <person name="Woyke T."/>
            <person name="Pitluck S."/>
            <person name="Pennacchio L."/>
            <person name="Nolan M."/>
            <person name="Mikhailova N."/>
            <person name="Lykidis A."/>
            <person name="Land M.L."/>
            <person name="Brettin T."/>
            <person name="Stetter K.O."/>
            <person name="Nelson K.E."/>
            <person name="Gogarten J.P."/>
            <person name="Noll K.M."/>
        </authorList>
    </citation>
    <scope>NUCLEOTIDE SEQUENCE [LARGE SCALE GENOMIC DNA]</scope>
    <source>
        <strain>RQ2</strain>
    </source>
</reference>
<comment type="similarity">
    <text evidence="1">Belongs to the universal ribosomal protein uL29 family.</text>
</comment>
<evidence type="ECO:0000255" key="1">
    <source>
        <dbReference type="HAMAP-Rule" id="MF_00374"/>
    </source>
</evidence>
<evidence type="ECO:0000305" key="2"/>
<name>RL29_THESQ</name>
<gene>
    <name evidence="1" type="primary">rpmC</name>
    <name type="ordered locus">TRQ2_1386</name>
</gene>